<evidence type="ECO:0000255" key="1"/>
<evidence type="ECO:0000256" key="2">
    <source>
        <dbReference type="SAM" id="MobiDB-lite"/>
    </source>
</evidence>
<evidence type="ECO:0000269" key="3">
    <source>
    </source>
</evidence>
<evidence type="ECO:0000305" key="4"/>
<reference key="1">
    <citation type="submission" date="2002-10" db="EMBL/GenBank/DDBJ databases">
        <authorList>
            <person name="Guo J.H."/>
            <person name="Chen S."/>
            <person name="Chen L."/>
            <person name="Yu L."/>
        </authorList>
    </citation>
    <scope>NUCLEOTIDE SEQUENCE [LARGE SCALE MRNA]</scope>
    <source>
        <tissue>Testis</tissue>
    </source>
</reference>
<reference key="2">
    <citation type="journal article" date="2003" name="Nature">
        <title>The DNA sequence and analysis of human chromosome 6.</title>
        <authorList>
            <person name="Mungall A.J."/>
            <person name="Palmer S.A."/>
            <person name="Sims S.K."/>
            <person name="Edwards C.A."/>
            <person name="Ashurst J.L."/>
            <person name="Wilming L."/>
            <person name="Jones M.C."/>
            <person name="Horton R."/>
            <person name="Hunt S.E."/>
            <person name="Scott C.E."/>
            <person name="Gilbert J.G.R."/>
            <person name="Clamp M.E."/>
            <person name="Bethel G."/>
            <person name="Milne S."/>
            <person name="Ainscough R."/>
            <person name="Almeida J.P."/>
            <person name="Ambrose K.D."/>
            <person name="Andrews T.D."/>
            <person name="Ashwell R.I.S."/>
            <person name="Babbage A.K."/>
            <person name="Bagguley C.L."/>
            <person name="Bailey J."/>
            <person name="Banerjee R."/>
            <person name="Barker D.J."/>
            <person name="Barlow K.F."/>
            <person name="Bates K."/>
            <person name="Beare D.M."/>
            <person name="Beasley H."/>
            <person name="Beasley O."/>
            <person name="Bird C.P."/>
            <person name="Blakey S.E."/>
            <person name="Bray-Allen S."/>
            <person name="Brook J."/>
            <person name="Brown A.J."/>
            <person name="Brown J.Y."/>
            <person name="Burford D.C."/>
            <person name="Burrill W."/>
            <person name="Burton J."/>
            <person name="Carder C."/>
            <person name="Carter N.P."/>
            <person name="Chapman J.C."/>
            <person name="Clark S.Y."/>
            <person name="Clark G."/>
            <person name="Clee C.M."/>
            <person name="Clegg S."/>
            <person name="Cobley V."/>
            <person name="Collier R.E."/>
            <person name="Collins J.E."/>
            <person name="Colman L.K."/>
            <person name="Corby N.R."/>
            <person name="Coville G.J."/>
            <person name="Culley K.M."/>
            <person name="Dhami P."/>
            <person name="Davies J."/>
            <person name="Dunn M."/>
            <person name="Earthrowl M.E."/>
            <person name="Ellington A.E."/>
            <person name="Evans K.A."/>
            <person name="Faulkner L."/>
            <person name="Francis M.D."/>
            <person name="Frankish A."/>
            <person name="Frankland J."/>
            <person name="French L."/>
            <person name="Garner P."/>
            <person name="Garnett J."/>
            <person name="Ghori M.J."/>
            <person name="Gilby L.M."/>
            <person name="Gillson C.J."/>
            <person name="Glithero R.J."/>
            <person name="Grafham D.V."/>
            <person name="Grant M."/>
            <person name="Gribble S."/>
            <person name="Griffiths C."/>
            <person name="Griffiths M.N.D."/>
            <person name="Hall R."/>
            <person name="Halls K.S."/>
            <person name="Hammond S."/>
            <person name="Harley J.L."/>
            <person name="Hart E.A."/>
            <person name="Heath P.D."/>
            <person name="Heathcott R."/>
            <person name="Holmes S.J."/>
            <person name="Howden P.J."/>
            <person name="Howe K.L."/>
            <person name="Howell G.R."/>
            <person name="Huckle E."/>
            <person name="Humphray S.J."/>
            <person name="Humphries M.D."/>
            <person name="Hunt A.R."/>
            <person name="Johnson C.M."/>
            <person name="Joy A.A."/>
            <person name="Kay M."/>
            <person name="Keenan S.J."/>
            <person name="Kimberley A.M."/>
            <person name="King A."/>
            <person name="Laird G.K."/>
            <person name="Langford C."/>
            <person name="Lawlor S."/>
            <person name="Leongamornlert D.A."/>
            <person name="Leversha M."/>
            <person name="Lloyd C.R."/>
            <person name="Lloyd D.M."/>
            <person name="Loveland J.E."/>
            <person name="Lovell J."/>
            <person name="Martin S."/>
            <person name="Mashreghi-Mohammadi M."/>
            <person name="Maslen G.L."/>
            <person name="Matthews L."/>
            <person name="McCann O.T."/>
            <person name="McLaren S.J."/>
            <person name="McLay K."/>
            <person name="McMurray A."/>
            <person name="Moore M.J.F."/>
            <person name="Mullikin J.C."/>
            <person name="Niblett D."/>
            <person name="Nickerson T."/>
            <person name="Novik K.L."/>
            <person name="Oliver K."/>
            <person name="Overton-Larty E.K."/>
            <person name="Parker A."/>
            <person name="Patel R."/>
            <person name="Pearce A.V."/>
            <person name="Peck A.I."/>
            <person name="Phillimore B.J.C.T."/>
            <person name="Phillips S."/>
            <person name="Plumb R.W."/>
            <person name="Porter K.M."/>
            <person name="Ramsey Y."/>
            <person name="Ranby S.A."/>
            <person name="Rice C.M."/>
            <person name="Ross M.T."/>
            <person name="Searle S.M."/>
            <person name="Sehra H.K."/>
            <person name="Sheridan E."/>
            <person name="Skuce C.D."/>
            <person name="Smith S."/>
            <person name="Smith M."/>
            <person name="Spraggon L."/>
            <person name="Squares S.L."/>
            <person name="Steward C.A."/>
            <person name="Sycamore N."/>
            <person name="Tamlyn-Hall G."/>
            <person name="Tester J."/>
            <person name="Theaker A.J."/>
            <person name="Thomas D.W."/>
            <person name="Thorpe A."/>
            <person name="Tracey A."/>
            <person name="Tromans A."/>
            <person name="Tubby B."/>
            <person name="Wall M."/>
            <person name="Wallis J.M."/>
            <person name="West A.P."/>
            <person name="White S.S."/>
            <person name="Whitehead S.L."/>
            <person name="Whittaker H."/>
            <person name="Wild A."/>
            <person name="Willey D.J."/>
            <person name="Wilmer T.E."/>
            <person name="Wood J.M."/>
            <person name="Wray P.W."/>
            <person name="Wyatt J.C."/>
            <person name="Young L."/>
            <person name="Younger R.M."/>
            <person name="Bentley D.R."/>
            <person name="Coulson A."/>
            <person name="Durbin R.M."/>
            <person name="Hubbard T."/>
            <person name="Sulston J.E."/>
            <person name="Dunham I."/>
            <person name="Rogers J."/>
            <person name="Beck S."/>
        </authorList>
    </citation>
    <scope>NUCLEOTIDE SEQUENCE [LARGE SCALE GENOMIC DNA]</scope>
</reference>
<reference key="3">
    <citation type="submission" date="2005-09" db="EMBL/GenBank/DDBJ databases">
        <authorList>
            <person name="Mural R.J."/>
            <person name="Istrail S."/>
            <person name="Sutton G.G."/>
            <person name="Florea L."/>
            <person name="Halpern A.L."/>
            <person name="Mobarry C.M."/>
            <person name="Lippert R."/>
            <person name="Walenz B."/>
            <person name="Shatkay H."/>
            <person name="Dew I."/>
            <person name="Miller J.R."/>
            <person name="Flanigan M.J."/>
            <person name="Edwards N.J."/>
            <person name="Bolanos R."/>
            <person name="Fasulo D."/>
            <person name="Halldorsson B.V."/>
            <person name="Hannenhalli S."/>
            <person name="Turner R."/>
            <person name="Yooseph S."/>
            <person name="Lu F."/>
            <person name="Nusskern D.R."/>
            <person name="Shue B.C."/>
            <person name="Zheng X.H."/>
            <person name="Zhong F."/>
            <person name="Delcher A.L."/>
            <person name="Huson D.H."/>
            <person name="Kravitz S.A."/>
            <person name="Mouchard L."/>
            <person name="Reinert K."/>
            <person name="Remington K.A."/>
            <person name="Clark A.G."/>
            <person name="Waterman M.S."/>
            <person name="Eichler E.E."/>
            <person name="Adams M.D."/>
            <person name="Hunkapiller M.W."/>
            <person name="Myers E.W."/>
            <person name="Venter J.C."/>
        </authorList>
    </citation>
    <scope>NUCLEOTIDE SEQUENCE [LARGE SCALE GENOMIC DNA]</scope>
</reference>
<reference key="4">
    <citation type="journal article" date="2004" name="Genome Res.">
        <title>The status, quality, and expansion of the NIH full-length cDNA project: the Mammalian Gene Collection (MGC).</title>
        <authorList>
            <consortium name="The MGC Project Team"/>
        </authorList>
    </citation>
    <scope>NUCLEOTIDE SEQUENCE [LARGE SCALE MRNA]</scope>
    <source>
        <tissue>Colon</tissue>
        <tissue>Prostate</tissue>
        <tissue>Testis</tissue>
    </source>
</reference>
<reference key="5">
    <citation type="journal article" date="2007" name="BMC Genomics">
        <title>The full-ORF clone resource of the German cDNA consortium.</title>
        <authorList>
            <person name="Bechtel S."/>
            <person name="Rosenfelder H."/>
            <person name="Duda A."/>
            <person name="Schmidt C.P."/>
            <person name="Ernst U."/>
            <person name="Wellenreuther R."/>
            <person name="Mehrle A."/>
            <person name="Schuster C."/>
            <person name="Bahr A."/>
            <person name="Bloecker H."/>
            <person name="Heubner D."/>
            <person name="Hoerlein A."/>
            <person name="Michel G."/>
            <person name="Wedler H."/>
            <person name="Koehrer K."/>
            <person name="Ottenwaelder B."/>
            <person name="Poustka A."/>
            <person name="Wiemann S."/>
            <person name="Schupp I."/>
        </authorList>
    </citation>
    <scope>NUCLEOTIDE SEQUENCE [LARGE SCALE MRNA] OF 33-274</scope>
    <source>
        <tissue>Uterus</tissue>
    </source>
</reference>
<reference key="6">
    <citation type="journal article" date="2005" name="Genes Chromosomes Cancer">
        <title>Characterization of 6q abnormalities in childhood acute myeloid leukemia and identification of a novel t(6;11)(q24.1;p15.5) resulting in a NUP98-C6orf80 fusion in a case of acute megakaryoblastic leukemia.</title>
        <authorList>
            <person name="Tosi S."/>
            <person name="Ballabio E."/>
            <person name="Teigler-Schlegel A."/>
            <person name="Boultwood J."/>
            <person name="Bruch J."/>
            <person name="Harbott J."/>
        </authorList>
    </citation>
    <scope>CHROMOSOMAL TRANSLOCATION WITH NUP98</scope>
    <scope>DISEASE</scope>
</reference>
<reference key="7">
    <citation type="journal article" date="2012" name="Haematologica">
        <title>Functional analysis of the NUP98-CCDC28A fusion protein.</title>
        <authorList>
            <person name="Petit A."/>
            <person name="Ragu C."/>
            <person name="Soler G."/>
            <person name="Ottolenghi C."/>
            <person name="Schluth C."/>
            <person name="Radford-Weiss I."/>
            <person name="Schneider-Maunoury S."/>
            <person name="Callebaut I."/>
            <person name="Dastugue N."/>
            <person name="Drabkin H.A."/>
            <person name="Bernard O.A."/>
            <person name="Romana S."/>
            <person name="Penard-Lacronique V."/>
        </authorList>
    </citation>
    <scope>CHROMOSOMAL TRANSLOCATION WITH NUP98</scope>
</reference>
<proteinExistence type="evidence at protein level"/>
<organism>
    <name type="scientific">Homo sapiens</name>
    <name type="common">Human</name>
    <dbReference type="NCBI Taxonomy" id="9606"/>
    <lineage>
        <taxon>Eukaryota</taxon>
        <taxon>Metazoa</taxon>
        <taxon>Chordata</taxon>
        <taxon>Craniata</taxon>
        <taxon>Vertebrata</taxon>
        <taxon>Euteleostomi</taxon>
        <taxon>Mammalia</taxon>
        <taxon>Eutheria</taxon>
        <taxon>Euarchontoglires</taxon>
        <taxon>Primates</taxon>
        <taxon>Haplorrhini</taxon>
        <taxon>Catarrhini</taxon>
        <taxon>Hominidae</taxon>
        <taxon>Homo</taxon>
    </lineage>
</organism>
<feature type="chain" id="PRO_0000089411" description="Coiled-coil domain-containing protein 28A">
    <location>
        <begin position="1"/>
        <end position="274"/>
    </location>
</feature>
<feature type="region of interest" description="Disordered" evidence="2">
    <location>
        <begin position="121"/>
        <end position="166"/>
    </location>
</feature>
<feature type="coiled-coil region" evidence="1">
    <location>
        <begin position="234"/>
        <end position="263"/>
    </location>
</feature>
<feature type="compositionally biased region" description="Polar residues" evidence="2">
    <location>
        <begin position="122"/>
        <end position="138"/>
    </location>
</feature>
<feature type="site" description="Breakpoint for translocation to form NUP98-CCDC28A">
    <location>
        <begin position="76"/>
        <end position="77"/>
    </location>
</feature>
<feature type="sequence variant" id="VAR_050744" description="In dbSNP:rs34538642.">
    <original>S</original>
    <variation>Y</variation>
    <location>
        <position position="42"/>
    </location>
</feature>
<feature type="sequence variant" id="VAR_050745" description="In dbSNP:rs2273510.">
    <original>P</original>
    <variation>L</variation>
    <location>
        <position position="82"/>
    </location>
</feature>
<sequence length="274" mass="30367">MPRAEPRATLGEQEKAGLPLGAWRLYLLRHFRKQTELRRSGSRDVTGALLVAAAVASEAVGSLRVAEGGPNTLLLQVLRSWPWCNKELKTMEERKVKRRSPKSFSAHCTQVVNAKKNAIPVSKSTGFSNPASQSTSQRPKLKRVMKEKTKPQGGEGKGAQSTPIQHSFLTDVSDVQEMERGLLSLLNDFHSGKLQAFGNECSIEQMEHVRGMQEKLARLNLELYGELEELPEDKRKTASDSNLDRLLSDLEELNSSIQKLHLADAQDVPNTSAS</sequence>
<name>CC28A_HUMAN</name>
<dbReference type="EMBL" id="AY167571">
    <property type="protein sequence ID" value="AAN87344.1"/>
    <property type="molecule type" value="mRNA"/>
</dbReference>
<dbReference type="EMBL" id="AL121834">
    <property type="status" value="NOT_ANNOTATED_CDS"/>
    <property type="molecule type" value="Genomic_DNA"/>
</dbReference>
<dbReference type="EMBL" id="CH471051">
    <property type="protein sequence ID" value="EAW47910.1"/>
    <property type="molecule type" value="Genomic_DNA"/>
</dbReference>
<dbReference type="EMBL" id="CH471051">
    <property type="protein sequence ID" value="EAW47911.1"/>
    <property type="molecule type" value="Genomic_DNA"/>
</dbReference>
<dbReference type="EMBL" id="BC013019">
    <property type="protein sequence ID" value="AAH13019.2"/>
    <property type="molecule type" value="mRNA"/>
</dbReference>
<dbReference type="EMBL" id="BC080566">
    <property type="protein sequence ID" value="AAH80566.1"/>
    <property type="molecule type" value="mRNA"/>
</dbReference>
<dbReference type="EMBL" id="BC108717">
    <property type="protein sequence ID" value="AAI08718.1"/>
    <property type="molecule type" value="mRNA"/>
</dbReference>
<dbReference type="EMBL" id="AL050197">
    <property type="protein sequence ID" value="CAB43315.1"/>
    <property type="molecule type" value="mRNA"/>
</dbReference>
<dbReference type="PIR" id="T08802">
    <property type="entry name" value="T08802"/>
</dbReference>
<dbReference type="RefSeq" id="NP_056254.1">
    <property type="nucleotide sequence ID" value="NM_015439.2"/>
</dbReference>
<dbReference type="SMR" id="Q8IWP9"/>
<dbReference type="BioGRID" id="117408">
    <property type="interactions" value="32"/>
</dbReference>
<dbReference type="FunCoup" id="Q8IWP9">
    <property type="interactions" value="180"/>
</dbReference>
<dbReference type="IntAct" id="Q8IWP9">
    <property type="interactions" value="15"/>
</dbReference>
<dbReference type="STRING" id="9606.ENSP00000479060"/>
<dbReference type="GlyCosmos" id="Q8IWP9">
    <property type="glycosylation" value="1 site, 1 glycan"/>
</dbReference>
<dbReference type="GlyGen" id="Q8IWP9">
    <property type="glycosylation" value="3 sites, 1 O-linked glycan (3 sites)"/>
</dbReference>
<dbReference type="iPTMnet" id="Q8IWP9"/>
<dbReference type="PhosphoSitePlus" id="Q8IWP9"/>
<dbReference type="BioMuta" id="CCDC28A"/>
<dbReference type="DMDM" id="68052352"/>
<dbReference type="jPOST" id="Q8IWP9"/>
<dbReference type="MassIVE" id="Q8IWP9"/>
<dbReference type="PaxDb" id="9606-ENSP00000479060"/>
<dbReference type="ProteomicsDB" id="70876"/>
<dbReference type="Pumba" id="Q8IWP9"/>
<dbReference type="TopDownProteomics" id="Q8IWP9"/>
<dbReference type="DNASU" id="25901"/>
<dbReference type="GeneID" id="25901"/>
<dbReference type="KEGG" id="hsa:25901"/>
<dbReference type="UCSC" id="uc003qie.3">
    <property type="organism name" value="human"/>
</dbReference>
<dbReference type="AGR" id="HGNC:21098"/>
<dbReference type="CTD" id="25901"/>
<dbReference type="DisGeNET" id="25901"/>
<dbReference type="GeneCards" id="CCDC28A"/>
<dbReference type="HGNC" id="HGNC:21098">
    <property type="gene designation" value="CCDC28A"/>
</dbReference>
<dbReference type="MIM" id="615353">
    <property type="type" value="gene"/>
</dbReference>
<dbReference type="neXtProt" id="NX_Q8IWP9"/>
<dbReference type="PharmGKB" id="PA134939277"/>
<dbReference type="eggNOG" id="ENOG502RYUK">
    <property type="taxonomic scope" value="Eukaryota"/>
</dbReference>
<dbReference type="HOGENOM" id="CLU_071072_0_0_1"/>
<dbReference type="InParanoid" id="Q8IWP9"/>
<dbReference type="OrthoDB" id="9977011at2759"/>
<dbReference type="PAN-GO" id="Q8IWP9">
    <property type="GO annotations" value="0 GO annotations based on evolutionary models"/>
</dbReference>
<dbReference type="PhylomeDB" id="Q8IWP9"/>
<dbReference type="TreeFam" id="TF323549"/>
<dbReference type="PathwayCommons" id="Q8IWP9"/>
<dbReference type="SignaLink" id="Q8IWP9"/>
<dbReference type="BioGRID-ORCS" id="25901">
    <property type="hits" value="15 hits in 1154 CRISPR screens"/>
</dbReference>
<dbReference type="ChiTaRS" id="CCDC28A">
    <property type="organism name" value="human"/>
</dbReference>
<dbReference type="GenomeRNAi" id="25901"/>
<dbReference type="Pharos" id="Q8IWP9">
    <property type="development level" value="Tdark"/>
</dbReference>
<dbReference type="PRO" id="PR:Q8IWP9"/>
<dbReference type="Proteomes" id="UP000005640">
    <property type="component" value="Chromosome 6"/>
</dbReference>
<dbReference type="RNAct" id="Q8IWP9">
    <property type="molecule type" value="protein"/>
</dbReference>
<dbReference type="InterPro" id="IPR025271">
    <property type="entry name" value="CCDC28"/>
</dbReference>
<dbReference type="PANTHER" id="PTHR13400">
    <property type="entry name" value="CHEMOKINE C-C MOTIF RECEPTOR 1"/>
    <property type="match status" value="1"/>
</dbReference>
<dbReference type="PANTHER" id="PTHR13400:SF3">
    <property type="entry name" value="COILED-COIL DOMAIN-CONTAINING PROTEIN 28A"/>
    <property type="match status" value="1"/>
</dbReference>
<dbReference type="Pfam" id="PF13270">
    <property type="entry name" value="CCDC28"/>
    <property type="match status" value="1"/>
</dbReference>
<protein>
    <recommendedName>
        <fullName>Coiled-coil domain-containing protein 28A</fullName>
    </recommendedName>
    <alternativeName>
        <fullName>CCRL1AP</fullName>
    </alternativeName>
</protein>
<accession>Q8IWP9</accession>
<accession>E1P591</accession>
<accession>Q32NC7</accession>
<accession>Q66K67</accession>
<accession>Q96E23</accession>
<accession>Q9Y430</accession>
<keyword id="KW-0160">Chromosomal rearrangement</keyword>
<keyword id="KW-0175">Coiled coil</keyword>
<keyword id="KW-1267">Proteomics identification</keyword>
<keyword id="KW-1185">Reference proteome</keyword>
<gene>
    <name type="primary">CCDC28A</name>
    <name type="synonym">C6orf80</name>
</gene>
<comment type="interaction">
    <interactant intactId="EBI-355471">
        <id>Q8IWP9</id>
    </interactant>
    <interactant intactId="EBI-1046751">
        <id>Q05084</id>
        <label>ICA1</label>
    </interactant>
    <organismsDiffer>false</organismsDiffer>
    <experiments>3</experiments>
</comment>
<comment type="interaction">
    <interactant intactId="EBI-355471">
        <id>Q8IWP9</id>
    </interactant>
    <interactant intactId="EBI-2125614">
        <id>Q9BVG8</id>
        <label>KIFC3</label>
    </interactant>
    <organismsDiffer>false</organismsDiffer>
    <experiments>3</experiments>
</comment>
<comment type="interaction">
    <interactant intactId="EBI-355471">
        <id>Q8IWP9</id>
    </interactant>
    <interactant intactId="EBI-1044640">
        <id>Q9BYQ4</id>
        <label>KRTAP9-2</label>
    </interactant>
    <organismsDiffer>false</organismsDiffer>
    <experiments>3</experiments>
</comment>
<comment type="interaction">
    <interactant intactId="EBI-355471">
        <id>Q8IWP9</id>
    </interactant>
    <interactant intactId="EBI-3906629">
        <id>P15173</id>
        <label>MYOG</label>
    </interactant>
    <organismsDiffer>false</organismsDiffer>
    <experiments>4</experiments>
</comment>
<comment type="interaction">
    <interactant intactId="EBI-355471">
        <id>Q8IWP9</id>
    </interactant>
    <interactant intactId="EBI-2130429">
        <id>Q9BYV2</id>
        <label>TRIM54</label>
    </interactant>
    <organismsDiffer>false</organismsDiffer>
    <experiments>3</experiments>
</comment>
<comment type="disease">
    <text evidence="3">A chromosomal aberration involving CCDC28A has been identified in acute leukemias. Translocation t(6;11)(q24.1;p15.5) with NUP98. The chimeric transcript is an in-frame fusion of NUP98 exon 13 to CCDC28A exon 2. Ectopic expression of NUP98-CCDC28A in mouse promotes the proliferative capacity and self-renewal potential of hematopoietic progenitors and rapidly induced fatal myeloproliferative neoplasms and defects in the differentiation of the erythro-megakaryocytic lineage.</text>
</comment>
<comment type="caution">
    <text evidence="4">It is uncertain whether Met-1 or Met-91 is the initiator. The first 90 residues are not conserved and orthologous sequences, including rat and mouse ones, contain a stop codon upstream of the conserved methionine.</text>
</comment>